<accession>Q8NWR0</accession>
<gene>
    <name type="ordered locus">MW1315</name>
</gene>
<feature type="chain" id="PRO_0000209792" description="DegV domain-containing protein MW1315">
    <location>
        <begin position="1"/>
        <end position="279"/>
    </location>
</feature>
<feature type="domain" description="DegV" evidence="3">
    <location>
        <begin position="4"/>
        <end position="278"/>
    </location>
</feature>
<feature type="binding site" evidence="2">
    <location>
        <position position="61"/>
    </location>
    <ligand>
        <name>hexadecanoate</name>
        <dbReference type="ChEBI" id="CHEBI:7896"/>
    </ligand>
</feature>
<feature type="binding site" evidence="2">
    <location>
        <position position="93"/>
    </location>
    <ligand>
        <name>hexadecanoate</name>
        <dbReference type="ChEBI" id="CHEBI:7896"/>
    </ligand>
</feature>
<feature type="strand" evidence="4">
    <location>
        <begin position="5"/>
        <end position="9"/>
    </location>
</feature>
<feature type="helix" evidence="4">
    <location>
        <begin position="16"/>
        <end position="21"/>
    </location>
</feature>
<feature type="strand" evidence="4">
    <location>
        <begin position="25"/>
        <end position="27"/>
    </location>
</feature>
<feature type="strand" evidence="4">
    <location>
        <begin position="30"/>
        <end position="33"/>
    </location>
</feature>
<feature type="strand" evidence="4">
    <location>
        <begin position="36"/>
        <end position="39"/>
    </location>
</feature>
<feature type="turn" evidence="4">
    <location>
        <begin position="40"/>
        <end position="42"/>
    </location>
</feature>
<feature type="helix" evidence="4">
    <location>
        <begin position="46"/>
        <end position="54"/>
    </location>
</feature>
<feature type="strand" evidence="4">
    <location>
        <begin position="59"/>
        <end position="62"/>
    </location>
</feature>
<feature type="helix" evidence="4">
    <location>
        <begin position="66"/>
        <end position="76"/>
    </location>
</feature>
<feature type="turn" evidence="4">
    <location>
        <begin position="77"/>
        <end position="79"/>
    </location>
</feature>
<feature type="strand" evidence="4">
    <location>
        <begin position="83"/>
        <end position="88"/>
    </location>
</feature>
<feature type="turn" evidence="4">
    <location>
        <begin position="90"/>
        <end position="92"/>
    </location>
</feature>
<feature type="helix" evidence="4">
    <location>
        <begin position="95"/>
        <end position="103"/>
    </location>
</feature>
<feature type="strand" evidence="4">
    <location>
        <begin position="105"/>
        <end position="108"/>
    </location>
</feature>
<feature type="strand" evidence="4">
    <location>
        <begin position="110"/>
        <end position="114"/>
    </location>
</feature>
<feature type="helix" evidence="4">
    <location>
        <begin position="120"/>
        <end position="134"/>
    </location>
</feature>
<feature type="helix" evidence="4">
    <location>
        <begin position="139"/>
        <end position="150"/>
    </location>
</feature>
<feature type="strand" evidence="4">
    <location>
        <begin position="153"/>
        <end position="158"/>
    </location>
</feature>
<feature type="helix" evidence="4">
    <location>
        <begin position="162"/>
        <end position="168"/>
    </location>
</feature>
<feature type="strand" evidence="4">
    <location>
        <begin position="171"/>
        <end position="173"/>
    </location>
</feature>
<feature type="strand" evidence="4">
    <location>
        <begin position="185"/>
        <end position="191"/>
    </location>
</feature>
<feature type="strand" evidence="4">
    <location>
        <begin position="194"/>
        <end position="203"/>
    </location>
</feature>
<feature type="helix" evidence="4">
    <location>
        <begin position="204"/>
        <end position="219"/>
    </location>
</feature>
<feature type="strand" evidence="4">
    <location>
        <begin position="224"/>
        <end position="233"/>
    </location>
</feature>
<feature type="helix" evidence="4">
    <location>
        <begin position="235"/>
        <end position="249"/>
    </location>
</feature>
<feature type="strand" evidence="4">
    <location>
        <begin position="255"/>
        <end position="258"/>
    </location>
</feature>
<feature type="helix" evidence="4">
    <location>
        <begin position="261"/>
        <end position="267"/>
    </location>
</feature>
<feature type="strand" evidence="4">
    <location>
        <begin position="272"/>
        <end position="278"/>
    </location>
</feature>
<evidence type="ECO:0000250" key="1"/>
<evidence type="ECO:0000250" key="2">
    <source>
        <dbReference type="UniProtKB" id="Q9X1H9"/>
    </source>
</evidence>
<evidence type="ECO:0000255" key="3">
    <source>
        <dbReference type="PROSITE-ProRule" id="PRU00815"/>
    </source>
</evidence>
<evidence type="ECO:0007829" key="4">
    <source>
        <dbReference type="PDB" id="4X9X"/>
    </source>
</evidence>
<protein>
    <recommendedName>
        <fullName>DegV domain-containing protein MW1315</fullName>
    </recommendedName>
</protein>
<dbReference type="EMBL" id="BA000033">
    <property type="protein sequence ID" value="BAB95180.1"/>
    <property type="molecule type" value="Genomic_DNA"/>
</dbReference>
<dbReference type="PDB" id="4X9X">
    <property type="method" value="X-ray"/>
    <property type="resolution" value="1.20 A"/>
    <property type="chains" value="A=1-279"/>
</dbReference>
<dbReference type="PDBsum" id="4X9X"/>
<dbReference type="SMR" id="Q8NWR0"/>
<dbReference type="KEGG" id="sam:MW1315"/>
<dbReference type="HOGENOM" id="CLU_048251_3_2_9"/>
<dbReference type="EvolutionaryTrace" id="Q8NWR0"/>
<dbReference type="GO" id="GO:0008289">
    <property type="term" value="F:lipid binding"/>
    <property type="evidence" value="ECO:0007669"/>
    <property type="project" value="UniProtKB-KW"/>
</dbReference>
<dbReference type="Gene3D" id="3.30.1180.10">
    <property type="match status" value="1"/>
</dbReference>
<dbReference type="Gene3D" id="3.40.50.10170">
    <property type="match status" value="1"/>
</dbReference>
<dbReference type="InterPro" id="IPR003797">
    <property type="entry name" value="DegV"/>
</dbReference>
<dbReference type="InterPro" id="IPR043168">
    <property type="entry name" value="DegV_C"/>
</dbReference>
<dbReference type="InterPro" id="IPR050270">
    <property type="entry name" value="DegV_domain_contain"/>
</dbReference>
<dbReference type="NCBIfam" id="TIGR00762">
    <property type="entry name" value="DegV"/>
    <property type="match status" value="1"/>
</dbReference>
<dbReference type="PANTHER" id="PTHR33434">
    <property type="entry name" value="DEGV DOMAIN-CONTAINING PROTEIN DR_1986-RELATED"/>
    <property type="match status" value="1"/>
</dbReference>
<dbReference type="PANTHER" id="PTHR33434:SF8">
    <property type="entry name" value="DEGV DOMAIN-CONTAINING PROTEIN SPR1019"/>
    <property type="match status" value="1"/>
</dbReference>
<dbReference type="Pfam" id="PF02645">
    <property type="entry name" value="DegV"/>
    <property type="match status" value="1"/>
</dbReference>
<dbReference type="SUPFAM" id="SSF82549">
    <property type="entry name" value="DAK1/DegV-like"/>
    <property type="match status" value="1"/>
</dbReference>
<dbReference type="PROSITE" id="PS51482">
    <property type="entry name" value="DEGV"/>
    <property type="match status" value="1"/>
</dbReference>
<sequence>MTKQIIVTDSTSDLSKEYLEANNIHVIPLSLTIEGASYVDQVDITSEEFINHIENDEDVKTSQPAIGEFISAYEELGKDGSEIISIHLSSGLSGTYNTAYQASQMVDANVTVIDSKSISFGLGYQIQHLVELVKEGVSTSEIVKKLNHLRENIKLFVVIGQLNQLIKGGRISKTKGLIGNLMKIKPIGTLDDGRLELVHNARTQNSSIQYLKKEIAEFIGDHEIKSIGVAHANVIEYVDKLKKVFNEAFHVNNYDINVTTPVISAHTGQGAIGLVVLKK</sequence>
<keyword id="KW-0002">3D-structure</keyword>
<keyword id="KW-0446">Lipid-binding</keyword>
<proteinExistence type="evidence at protein level"/>
<organism>
    <name type="scientific">Staphylococcus aureus (strain MW2)</name>
    <dbReference type="NCBI Taxonomy" id="196620"/>
    <lineage>
        <taxon>Bacteria</taxon>
        <taxon>Bacillati</taxon>
        <taxon>Bacillota</taxon>
        <taxon>Bacilli</taxon>
        <taxon>Bacillales</taxon>
        <taxon>Staphylococcaceae</taxon>
        <taxon>Staphylococcus</taxon>
    </lineage>
</organism>
<comment type="function">
    <text evidence="1">May bind long-chain fatty acids, such as palmitate, and may play a role in lipid transport or fatty acid metabolism.</text>
</comment>
<reference key="1">
    <citation type="journal article" date="2002" name="Lancet">
        <title>Genome and virulence determinants of high virulence community-acquired MRSA.</title>
        <authorList>
            <person name="Baba T."/>
            <person name="Takeuchi F."/>
            <person name="Kuroda M."/>
            <person name="Yuzawa H."/>
            <person name="Aoki K."/>
            <person name="Oguchi A."/>
            <person name="Nagai Y."/>
            <person name="Iwama N."/>
            <person name="Asano K."/>
            <person name="Naimi T."/>
            <person name="Kuroda H."/>
            <person name="Cui L."/>
            <person name="Yamamoto K."/>
            <person name="Hiramatsu K."/>
        </authorList>
    </citation>
    <scope>NUCLEOTIDE SEQUENCE [LARGE SCALE GENOMIC DNA]</scope>
    <source>
        <strain>MW2</strain>
    </source>
</reference>
<name>Y1315_STAAW</name>